<organism>
    <name type="scientific">Streptococcus pyogenes serotype M49 (strain NZ131)</name>
    <dbReference type="NCBI Taxonomy" id="471876"/>
    <lineage>
        <taxon>Bacteria</taxon>
        <taxon>Bacillati</taxon>
        <taxon>Bacillota</taxon>
        <taxon>Bacilli</taxon>
        <taxon>Lactobacillales</taxon>
        <taxon>Streptococcaceae</taxon>
        <taxon>Streptococcus</taxon>
    </lineage>
</organism>
<keyword id="KW-0963">Cytoplasm</keyword>
<keyword id="KW-0312">Gluconeogenesis</keyword>
<keyword id="KW-0324">Glycolysis</keyword>
<keyword id="KW-0413">Isomerase</keyword>
<name>G6PI_STRPZ</name>
<protein>
    <recommendedName>
        <fullName evidence="1">Glucose-6-phosphate isomerase</fullName>
        <shortName evidence="1">GPI</shortName>
        <ecNumber evidence="1">5.3.1.9</ecNumber>
    </recommendedName>
    <alternativeName>
        <fullName evidence="1">Phosphoglucose isomerase</fullName>
        <shortName evidence="1">PGI</shortName>
    </alternativeName>
    <alternativeName>
        <fullName evidence="1">Phosphohexose isomerase</fullName>
        <shortName evidence="1">PHI</shortName>
    </alternativeName>
</protein>
<evidence type="ECO:0000255" key="1">
    <source>
        <dbReference type="HAMAP-Rule" id="MF_00473"/>
    </source>
</evidence>
<dbReference type="EC" id="5.3.1.9" evidence="1"/>
<dbReference type="EMBL" id="CP000829">
    <property type="protein sequence ID" value="ACI60532.1"/>
    <property type="molecule type" value="Genomic_DNA"/>
</dbReference>
<dbReference type="SMR" id="B5XJM0"/>
<dbReference type="KEGG" id="soz:Spy49_0188"/>
<dbReference type="HOGENOM" id="CLU_037303_0_1_9"/>
<dbReference type="UniPathway" id="UPA00109">
    <property type="reaction ID" value="UER00181"/>
</dbReference>
<dbReference type="UniPathway" id="UPA00138"/>
<dbReference type="Proteomes" id="UP000001039">
    <property type="component" value="Chromosome"/>
</dbReference>
<dbReference type="GO" id="GO:0005829">
    <property type="term" value="C:cytosol"/>
    <property type="evidence" value="ECO:0007669"/>
    <property type="project" value="TreeGrafter"/>
</dbReference>
<dbReference type="GO" id="GO:0097367">
    <property type="term" value="F:carbohydrate derivative binding"/>
    <property type="evidence" value="ECO:0007669"/>
    <property type="project" value="InterPro"/>
</dbReference>
<dbReference type="GO" id="GO:0004347">
    <property type="term" value="F:glucose-6-phosphate isomerase activity"/>
    <property type="evidence" value="ECO:0007669"/>
    <property type="project" value="UniProtKB-UniRule"/>
</dbReference>
<dbReference type="GO" id="GO:0048029">
    <property type="term" value="F:monosaccharide binding"/>
    <property type="evidence" value="ECO:0007669"/>
    <property type="project" value="TreeGrafter"/>
</dbReference>
<dbReference type="GO" id="GO:0006094">
    <property type="term" value="P:gluconeogenesis"/>
    <property type="evidence" value="ECO:0007669"/>
    <property type="project" value="UniProtKB-UniRule"/>
</dbReference>
<dbReference type="GO" id="GO:0051156">
    <property type="term" value="P:glucose 6-phosphate metabolic process"/>
    <property type="evidence" value="ECO:0007669"/>
    <property type="project" value="TreeGrafter"/>
</dbReference>
<dbReference type="GO" id="GO:0006096">
    <property type="term" value="P:glycolytic process"/>
    <property type="evidence" value="ECO:0007669"/>
    <property type="project" value="UniProtKB-UniRule"/>
</dbReference>
<dbReference type="CDD" id="cd05015">
    <property type="entry name" value="SIS_PGI_1"/>
    <property type="match status" value="1"/>
</dbReference>
<dbReference type="CDD" id="cd05016">
    <property type="entry name" value="SIS_PGI_2"/>
    <property type="match status" value="1"/>
</dbReference>
<dbReference type="FunFam" id="3.40.50.10490:FF:000015">
    <property type="entry name" value="Glucose-6-phosphate isomerase"/>
    <property type="match status" value="1"/>
</dbReference>
<dbReference type="FunFam" id="3.40.50.10490:FF:000016">
    <property type="entry name" value="Glucose-6-phosphate isomerase"/>
    <property type="match status" value="1"/>
</dbReference>
<dbReference type="Gene3D" id="3.40.50.10490">
    <property type="entry name" value="Glucose-6-phosphate isomerase like protein, domain 1"/>
    <property type="match status" value="2"/>
</dbReference>
<dbReference type="HAMAP" id="MF_00473">
    <property type="entry name" value="G6P_isomerase"/>
    <property type="match status" value="1"/>
</dbReference>
<dbReference type="InterPro" id="IPR001672">
    <property type="entry name" value="G6P_Isomerase"/>
</dbReference>
<dbReference type="InterPro" id="IPR018189">
    <property type="entry name" value="Phosphoglucose_isomerase_CS"/>
</dbReference>
<dbReference type="InterPro" id="IPR046348">
    <property type="entry name" value="SIS_dom_sf"/>
</dbReference>
<dbReference type="InterPro" id="IPR035476">
    <property type="entry name" value="SIS_PGI_1"/>
</dbReference>
<dbReference type="InterPro" id="IPR035482">
    <property type="entry name" value="SIS_PGI_2"/>
</dbReference>
<dbReference type="NCBIfam" id="NF010697">
    <property type="entry name" value="PRK14097.1"/>
    <property type="match status" value="1"/>
</dbReference>
<dbReference type="PANTHER" id="PTHR11469">
    <property type="entry name" value="GLUCOSE-6-PHOSPHATE ISOMERASE"/>
    <property type="match status" value="1"/>
</dbReference>
<dbReference type="PANTHER" id="PTHR11469:SF1">
    <property type="entry name" value="GLUCOSE-6-PHOSPHATE ISOMERASE"/>
    <property type="match status" value="1"/>
</dbReference>
<dbReference type="Pfam" id="PF00342">
    <property type="entry name" value="PGI"/>
    <property type="match status" value="1"/>
</dbReference>
<dbReference type="PRINTS" id="PR00662">
    <property type="entry name" value="G6PISOMERASE"/>
</dbReference>
<dbReference type="SUPFAM" id="SSF53697">
    <property type="entry name" value="SIS domain"/>
    <property type="match status" value="1"/>
</dbReference>
<dbReference type="PROSITE" id="PS00765">
    <property type="entry name" value="P_GLUCOSE_ISOMERASE_1"/>
    <property type="match status" value="1"/>
</dbReference>
<dbReference type="PROSITE" id="PS00174">
    <property type="entry name" value="P_GLUCOSE_ISOMERASE_2"/>
    <property type="match status" value="1"/>
</dbReference>
<dbReference type="PROSITE" id="PS51463">
    <property type="entry name" value="P_GLUCOSE_ISOMERASE_3"/>
    <property type="match status" value="1"/>
</dbReference>
<sequence length="449" mass="49497">MSHITFDYSKVLESFAGQHEIDFLQGQVTEADKLLREGTGPGSDFLGWLDLPENYDKEEFARILTAAEKIKSDSEVLVVIGIGGSYLGAKAAIDFLNHHFANLQTAKERKAPQILYAGNSISSTYLADLVEYVQDKEFSVNVISKSGTTTEPAIAFRVFKELLVKKYGQEEANKRIYATTDKVKGAVKVEADANNWETFVVPDNVGGRFSVLTAVGLLPIAASGADITALMEGANAARKDLSSDKISENIAYQYAAVRNLLYRKGYITEILANYEPSLQYFGEWWKQLAGESEGKDQKGIYPTSANFSTDLHSLGQFIQEGYRNLFETVIRVDNPRKNVIIPELAEDLDGLGYLQGKDVDFVNKKATDGVLLAHTDGGVPNMFVTLPAQDEFTLGYTIYFFELAIAVSGYMNAVNPFDQPGVEAYKRNMFALLGKPGFEALSAELNARL</sequence>
<feature type="chain" id="PRO_1000125768" description="Glucose-6-phosphate isomerase">
    <location>
        <begin position="1"/>
        <end position="449"/>
    </location>
</feature>
<feature type="active site" description="Proton donor" evidence="1">
    <location>
        <position position="291"/>
    </location>
</feature>
<feature type="active site" evidence="1">
    <location>
        <position position="312"/>
    </location>
</feature>
<feature type="active site" evidence="1">
    <location>
        <position position="426"/>
    </location>
</feature>
<accession>B5XJM0</accession>
<gene>
    <name evidence="1" type="primary">pgi</name>
    <name type="ordered locus">Spy49_0188</name>
</gene>
<reference key="1">
    <citation type="journal article" date="2008" name="J. Bacteriol.">
        <title>Genome sequence of a nephritogenic and highly transformable M49 strain of Streptococcus pyogenes.</title>
        <authorList>
            <person name="McShan W.M."/>
            <person name="Ferretti J.J."/>
            <person name="Karasawa T."/>
            <person name="Suvorov A.N."/>
            <person name="Lin S."/>
            <person name="Qin B."/>
            <person name="Jia H."/>
            <person name="Kenton S."/>
            <person name="Najar F."/>
            <person name="Wu H."/>
            <person name="Scott J."/>
            <person name="Roe B.A."/>
            <person name="Savic D.J."/>
        </authorList>
    </citation>
    <scope>NUCLEOTIDE SEQUENCE [LARGE SCALE GENOMIC DNA]</scope>
    <source>
        <strain>NZ131</strain>
    </source>
</reference>
<comment type="function">
    <text evidence="1">Catalyzes the reversible isomerization of glucose-6-phosphate to fructose-6-phosphate.</text>
</comment>
<comment type="catalytic activity">
    <reaction evidence="1">
        <text>alpha-D-glucose 6-phosphate = beta-D-fructose 6-phosphate</text>
        <dbReference type="Rhea" id="RHEA:11816"/>
        <dbReference type="ChEBI" id="CHEBI:57634"/>
        <dbReference type="ChEBI" id="CHEBI:58225"/>
        <dbReference type="EC" id="5.3.1.9"/>
    </reaction>
</comment>
<comment type="pathway">
    <text evidence="1">Carbohydrate biosynthesis; gluconeogenesis.</text>
</comment>
<comment type="pathway">
    <text evidence="1">Carbohydrate degradation; glycolysis; D-glyceraldehyde 3-phosphate and glycerone phosphate from D-glucose: step 2/4.</text>
</comment>
<comment type="subcellular location">
    <subcellularLocation>
        <location evidence="1">Cytoplasm</location>
    </subcellularLocation>
</comment>
<comment type="similarity">
    <text evidence="1">Belongs to the GPI family.</text>
</comment>
<proteinExistence type="inferred from homology"/>